<feature type="chain" id="PRO_1000078068" description="Uroporphyrinogen decarboxylase">
    <location>
        <begin position="1"/>
        <end position="355"/>
    </location>
</feature>
<feature type="binding site" evidence="1">
    <location>
        <begin position="23"/>
        <end position="27"/>
    </location>
    <ligand>
        <name>substrate</name>
    </ligand>
</feature>
<feature type="binding site" evidence="1">
    <location>
        <position position="72"/>
    </location>
    <ligand>
        <name>substrate</name>
    </ligand>
</feature>
<feature type="binding site" evidence="1">
    <location>
        <position position="148"/>
    </location>
    <ligand>
        <name>substrate</name>
    </ligand>
</feature>
<feature type="binding site" evidence="1">
    <location>
        <position position="203"/>
    </location>
    <ligand>
        <name>substrate</name>
    </ligand>
</feature>
<feature type="binding site" evidence="1">
    <location>
        <position position="321"/>
    </location>
    <ligand>
        <name>substrate</name>
    </ligand>
</feature>
<feature type="site" description="Transition state stabilizer" evidence="1">
    <location>
        <position position="72"/>
    </location>
</feature>
<evidence type="ECO:0000255" key="1">
    <source>
        <dbReference type="HAMAP-Rule" id="MF_00218"/>
    </source>
</evidence>
<reference key="1">
    <citation type="journal article" date="2011" name="BMC Genomics">
        <title>Complete genome sequence of the filamentous anoxygenic phototrophic bacterium Chloroflexus aurantiacus.</title>
        <authorList>
            <person name="Tang K.H."/>
            <person name="Barry K."/>
            <person name="Chertkov O."/>
            <person name="Dalin E."/>
            <person name="Han C.S."/>
            <person name="Hauser L.J."/>
            <person name="Honchak B.M."/>
            <person name="Karbach L.E."/>
            <person name="Land M.L."/>
            <person name="Lapidus A."/>
            <person name="Larimer F.W."/>
            <person name="Mikhailova N."/>
            <person name="Pitluck S."/>
            <person name="Pierson B.K."/>
            <person name="Blankenship R.E."/>
        </authorList>
    </citation>
    <scope>NUCLEOTIDE SEQUENCE [LARGE SCALE GENOMIC DNA]</scope>
    <source>
        <strain>ATCC 29366 / DSM 635 / J-10-fl</strain>
    </source>
</reference>
<dbReference type="EC" id="4.1.1.37" evidence="1"/>
<dbReference type="EMBL" id="CP000909">
    <property type="protein sequence ID" value="ABY35803.1"/>
    <property type="molecule type" value="Genomic_DNA"/>
</dbReference>
<dbReference type="RefSeq" id="WP_012258456.1">
    <property type="nucleotide sequence ID" value="NC_010175.1"/>
</dbReference>
<dbReference type="RefSeq" id="YP_001636192.1">
    <property type="nucleotide sequence ID" value="NC_010175.1"/>
</dbReference>
<dbReference type="SMR" id="A9WIS6"/>
<dbReference type="FunCoup" id="A9WIS6">
    <property type="interactions" value="489"/>
</dbReference>
<dbReference type="STRING" id="324602.Caur_2597"/>
<dbReference type="EnsemblBacteria" id="ABY35803">
    <property type="protein sequence ID" value="ABY35803"/>
    <property type="gene ID" value="Caur_2597"/>
</dbReference>
<dbReference type="KEGG" id="cau:Caur_2597"/>
<dbReference type="PATRIC" id="fig|324602.8.peg.2925"/>
<dbReference type="eggNOG" id="COG0407">
    <property type="taxonomic scope" value="Bacteria"/>
</dbReference>
<dbReference type="HOGENOM" id="CLU_040933_0_1_0"/>
<dbReference type="InParanoid" id="A9WIS6"/>
<dbReference type="UniPathway" id="UPA00251">
    <property type="reaction ID" value="UER00321"/>
</dbReference>
<dbReference type="Proteomes" id="UP000002008">
    <property type="component" value="Chromosome"/>
</dbReference>
<dbReference type="GO" id="GO:0005829">
    <property type="term" value="C:cytosol"/>
    <property type="evidence" value="ECO:0000318"/>
    <property type="project" value="GO_Central"/>
</dbReference>
<dbReference type="GO" id="GO:0004853">
    <property type="term" value="F:uroporphyrinogen decarboxylase activity"/>
    <property type="evidence" value="ECO:0000318"/>
    <property type="project" value="GO_Central"/>
</dbReference>
<dbReference type="GO" id="GO:0006783">
    <property type="term" value="P:heme biosynthetic process"/>
    <property type="evidence" value="ECO:0000318"/>
    <property type="project" value="GO_Central"/>
</dbReference>
<dbReference type="GO" id="GO:0006782">
    <property type="term" value="P:protoporphyrinogen IX biosynthetic process"/>
    <property type="evidence" value="ECO:0007669"/>
    <property type="project" value="UniProtKB-UniRule"/>
</dbReference>
<dbReference type="CDD" id="cd00717">
    <property type="entry name" value="URO-D"/>
    <property type="match status" value="1"/>
</dbReference>
<dbReference type="FunFam" id="3.20.20.210:FF:000005">
    <property type="entry name" value="Uroporphyrinogen decarboxylase"/>
    <property type="match status" value="1"/>
</dbReference>
<dbReference type="Gene3D" id="3.20.20.210">
    <property type="match status" value="1"/>
</dbReference>
<dbReference type="HAMAP" id="MF_00218">
    <property type="entry name" value="URO_D"/>
    <property type="match status" value="1"/>
</dbReference>
<dbReference type="InterPro" id="IPR038071">
    <property type="entry name" value="UROD/MetE-like_sf"/>
</dbReference>
<dbReference type="InterPro" id="IPR006361">
    <property type="entry name" value="Uroporphyrinogen_deCO2ase_HemE"/>
</dbReference>
<dbReference type="InterPro" id="IPR000257">
    <property type="entry name" value="Uroporphyrinogen_deCOase"/>
</dbReference>
<dbReference type="NCBIfam" id="TIGR01464">
    <property type="entry name" value="hemE"/>
    <property type="match status" value="1"/>
</dbReference>
<dbReference type="PANTHER" id="PTHR21091">
    <property type="entry name" value="METHYLTETRAHYDROFOLATE:HOMOCYSTEINE METHYLTRANSFERASE RELATED"/>
    <property type="match status" value="1"/>
</dbReference>
<dbReference type="PANTHER" id="PTHR21091:SF169">
    <property type="entry name" value="UROPORPHYRINOGEN DECARBOXYLASE"/>
    <property type="match status" value="1"/>
</dbReference>
<dbReference type="Pfam" id="PF01208">
    <property type="entry name" value="URO-D"/>
    <property type="match status" value="1"/>
</dbReference>
<dbReference type="SUPFAM" id="SSF51726">
    <property type="entry name" value="UROD/MetE-like"/>
    <property type="match status" value="1"/>
</dbReference>
<dbReference type="PROSITE" id="PS00906">
    <property type="entry name" value="UROD_1"/>
    <property type="match status" value="1"/>
</dbReference>
<dbReference type="PROSITE" id="PS00907">
    <property type="entry name" value="UROD_2"/>
    <property type="match status" value="1"/>
</dbReference>
<sequence length="355" mass="39488">MRDRFLRACRRQPVDRTPIWLMRQAGRYMPEYRAIRERYGFLQMVKTPEVAAEVTLQPVQAFGVDAAIIFADILPPLEGLGLQLTYEKGEGPVIHNPIRSPHDVSVLRSCDPRETVAYTLAALQLVKRELNGLPLIGFSGAPFTLASYAIEGGGSREYRLTKRFMYEQPAAWHDLMERLSRLVADYLIAQIEAGADAVQIFDSWAGALSPADYRAYVLRHTQALVQTIRARLGDVTPPIIYFGTDMAGLAGEVRQIGADVLGVDWRIDLDVAWAQYGFNHAVQGNLDPMTLFAPPSIIAARARDILERAGGRPGHIFNLGHGILTETPVDHVRYLVEFVQSYPLPATAPVLQEVV</sequence>
<accession>A9WIS6</accession>
<name>DCUP_CHLAA</name>
<keyword id="KW-0963">Cytoplasm</keyword>
<keyword id="KW-0210">Decarboxylase</keyword>
<keyword id="KW-0456">Lyase</keyword>
<keyword id="KW-0627">Porphyrin biosynthesis</keyword>
<keyword id="KW-1185">Reference proteome</keyword>
<comment type="function">
    <text evidence="1">Catalyzes the decarboxylation of four acetate groups of uroporphyrinogen-III to yield coproporphyrinogen-III.</text>
</comment>
<comment type="catalytic activity">
    <reaction evidence="1">
        <text>uroporphyrinogen III + 4 H(+) = coproporphyrinogen III + 4 CO2</text>
        <dbReference type="Rhea" id="RHEA:19865"/>
        <dbReference type="ChEBI" id="CHEBI:15378"/>
        <dbReference type="ChEBI" id="CHEBI:16526"/>
        <dbReference type="ChEBI" id="CHEBI:57308"/>
        <dbReference type="ChEBI" id="CHEBI:57309"/>
        <dbReference type="EC" id="4.1.1.37"/>
    </reaction>
</comment>
<comment type="pathway">
    <text evidence="1">Porphyrin-containing compound metabolism; protoporphyrin-IX biosynthesis; coproporphyrinogen-III from 5-aminolevulinate: step 4/4.</text>
</comment>
<comment type="subunit">
    <text evidence="1">Homodimer.</text>
</comment>
<comment type="subcellular location">
    <subcellularLocation>
        <location evidence="1">Cytoplasm</location>
    </subcellularLocation>
</comment>
<comment type="similarity">
    <text evidence="1">Belongs to the uroporphyrinogen decarboxylase family.</text>
</comment>
<gene>
    <name evidence="1" type="primary">hemE</name>
    <name type="ordered locus">Caur_2597</name>
</gene>
<proteinExistence type="inferred from homology"/>
<organism>
    <name type="scientific">Chloroflexus aurantiacus (strain ATCC 29366 / DSM 635 / J-10-fl)</name>
    <dbReference type="NCBI Taxonomy" id="324602"/>
    <lineage>
        <taxon>Bacteria</taxon>
        <taxon>Bacillati</taxon>
        <taxon>Chloroflexota</taxon>
        <taxon>Chloroflexia</taxon>
        <taxon>Chloroflexales</taxon>
        <taxon>Chloroflexineae</taxon>
        <taxon>Chloroflexaceae</taxon>
        <taxon>Chloroflexus</taxon>
    </lineage>
</organism>
<protein>
    <recommendedName>
        <fullName evidence="1">Uroporphyrinogen decarboxylase</fullName>
        <shortName evidence="1">UPD</shortName>
        <shortName evidence="1">URO-D</shortName>
        <ecNumber evidence="1">4.1.1.37</ecNumber>
    </recommendedName>
</protein>